<reference key="1">
    <citation type="journal article" date="2004" name="PLoS Biol.">
        <title>Phylogenomics of the reproductive parasite Wolbachia pipientis wMel: a streamlined genome overrun by mobile genetic elements.</title>
        <authorList>
            <person name="Wu M."/>
            <person name="Sun L.V."/>
            <person name="Vamathevan J.J."/>
            <person name="Riegler M."/>
            <person name="DeBoy R.T."/>
            <person name="Brownlie J.C."/>
            <person name="McGraw E.A."/>
            <person name="Martin W."/>
            <person name="Esser C."/>
            <person name="Ahmadinejad N."/>
            <person name="Wiegand C."/>
            <person name="Madupu R."/>
            <person name="Beanan M.J."/>
            <person name="Brinkac L.M."/>
            <person name="Daugherty S.C."/>
            <person name="Durkin A.S."/>
            <person name="Kolonay J.F."/>
            <person name="Nelson W.C."/>
            <person name="Mohamoud Y."/>
            <person name="Lee P."/>
            <person name="Berry K.J."/>
            <person name="Young M.B."/>
            <person name="Utterback T.R."/>
            <person name="Weidman J.F."/>
            <person name="Nierman W.C."/>
            <person name="Paulsen I.T."/>
            <person name="Nelson K.E."/>
            <person name="Tettelin H."/>
            <person name="O'Neill S.L."/>
            <person name="Eisen J.A."/>
        </authorList>
    </citation>
    <scope>NUCLEOTIDE SEQUENCE [LARGE SCALE GENOMIC DNA]</scope>
</reference>
<evidence type="ECO:0000255" key="1">
    <source>
        <dbReference type="HAMAP-Rule" id="MF_00500"/>
    </source>
</evidence>
<evidence type="ECO:0000305" key="2"/>
<dbReference type="EMBL" id="AE017196">
    <property type="protein sequence ID" value="AAS14800.1"/>
    <property type="molecule type" value="Genomic_DNA"/>
</dbReference>
<dbReference type="RefSeq" id="WP_010081981.1">
    <property type="nucleotide sequence ID" value="NZ_OX384529.1"/>
</dbReference>
<dbReference type="SMR" id="Q73G18"/>
<dbReference type="EnsemblBacteria" id="AAS14800">
    <property type="protein sequence ID" value="AAS14800"/>
    <property type="gene ID" value="WD_1150"/>
</dbReference>
<dbReference type="GeneID" id="70036621"/>
<dbReference type="KEGG" id="wol:WD_1150"/>
<dbReference type="eggNOG" id="COG0268">
    <property type="taxonomic scope" value="Bacteria"/>
</dbReference>
<dbReference type="Proteomes" id="UP000008215">
    <property type="component" value="Chromosome"/>
</dbReference>
<dbReference type="GO" id="GO:0005829">
    <property type="term" value="C:cytosol"/>
    <property type="evidence" value="ECO:0007669"/>
    <property type="project" value="TreeGrafter"/>
</dbReference>
<dbReference type="GO" id="GO:0015935">
    <property type="term" value="C:small ribosomal subunit"/>
    <property type="evidence" value="ECO:0007669"/>
    <property type="project" value="TreeGrafter"/>
</dbReference>
<dbReference type="GO" id="GO:0070181">
    <property type="term" value="F:small ribosomal subunit rRNA binding"/>
    <property type="evidence" value="ECO:0007669"/>
    <property type="project" value="TreeGrafter"/>
</dbReference>
<dbReference type="GO" id="GO:0003735">
    <property type="term" value="F:structural constituent of ribosome"/>
    <property type="evidence" value="ECO:0007669"/>
    <property type="project" value="InterPro"/>
</dbReference>
<dbReference type="GO" id="GO:0006412">
    <property type="term" value="P:translation"/>
    <property type="evidence" value="ECO:0007669"/>
    <property type="project" value="UniProtKB-UniRule"/>
</dbReference>
<dbReference type="FunFam" id="1.20.58.110:FF:000001">
    <property type="entry name" value="30S ribosomal protein S20"/>
    <property type="match status" value="1"/>
</dbReference>
<dbReference type="Gene3D" id="1.20.58.110">
    <property type="entry name" value="Ribosomal protein S20"/>
    <property type="match status" value="1"/>
</dbReference>
<dbReference type="HAMAP" id="MF_00500">
    <property type="entry name" value="Ribosomal_bS20"/>
    <property type="match status" value="1"/>
</dbReference>
<dbReference type="InterPro" id="IPR002583">
    <property type="entry name" value="Ribosomal_bS20"/>
</dbReference>
<dbReference type="InterPro" id="IPR036510">
    <property type="entry name" value="Ribosomal_bS20_sf"/>
</dbReference>
<dbReference type="NCBIfam" id="TIGR00029">
    <property type="entry name" value="S20"/>
    <property type="match status" value="1"/>
</dbReference>
<dbReference type="PANTHER" id="PTHR33398">
    <property type="entry name" value="30S RIBOSOMAL PROTEIN S20"/>
    <property type="match status" value="1"/>
</dbReference>
<dbReference type="PANTHER" id="PTHR33398:SF1">
    <property type="entry name" value="SMALL RIBOSOMAL SUBUNIT PROTEIN BS20C"/>
    <property type="match status" value="1"/>
</dbReference>
<dbReference type="Pfam" id="PF01649">
    <property type="entry name" value="Ribosomal_S20p"/>
    <property type="match status" value="1"/>
</dbReference>
<dbReference type="SUPFAM" id="SSF46992">
    <property type="entry name" value="Ribosomal protein S20"/>
    <property type="match status" value="1"/>
</dbReference>
<sequence length="89" mass="10007">MANHKSAKKMIKVIAKRTLINKMRKSKTRTAIRNLVDIIKSGDKENVVLAFRNAESNLHKCVNKGVIHRNTAARKISRLNAKVKALMTA</sequence>
<keyword id="KW-0687">Ribonucleoprotein</keyword>
<keyword id="KW-0689">Ribosomal protein</keyword>
<keyword id="KW-0694">RNA-binding</keyword>
<keyword id="KW-0699">rRNA-binding</keyword>
<proteinExistence type="inferred from homology"/>
<protein>
    <recommendedName>
        <fullName evidence="1">Small ribosomal subunit protein bS20</fullName>
    </recommendedName>
    <alternativeName>
        <fullName evidence="2">30S ribosomal protein S20</fullName>
    </alternativeName>
</protein>
<organism>
    <name type="scientific">Wolbachia pipientis wMel</name>
    <dbReference type="NCBI Taxonomy" id="163164"/>
    <lineage>
        <taxon>Bacteria</taxon>
        <taxon>Pseudomonadati</taxon>
        <taxon>Pseudomonadota</taxon>
        <taxon>Alphaproteobacteria</taxon>
        <taxon>Rickettsiales</taxon>
        <taxon>Anaplasmataceae</taxon>
        <taxon>Wolbachieae</taxon>
        <taxon>Wolbachia</taxon>
    </lineage>
</organism>
<feature type="chain" id="PRO_0000168061" description="Small ribosomal subunit protein bS20">
    <location>
        <begin position="1"/>
        <end position="89"/>
    </location>
</feature>
<comment type="function">
    <text evidence="1">Binds directly to 16S ribosomal RNA.</text>
</comment>
<comment type="similarity">
    <text evidence="1">Belongs to the bacterial ribosomal protein bS20 family.</text>
</comment>
<gene>
    <name evidence="1" type="primary">rpsT</name>
    <name type="ordered locus">WD_1150</name>
</gene>
<name>RS20_WOLPM</name>
<accession>Q73G18</accession>